<organism>
    <name type="scientific">Methanosarcina thermophila</name>
    <dbReference type="NCBI Taxonomy" id="2210"/>
    <lineage>
        <taxon>Archaea</taxon>
        <taxon>Methanobacteriati</taxon>
        <taxon>Methanobacteriota</taxon>
        <taxon>Stenosarchaea group</taxon>
        <taxon>Methanomicrobia</taxon>
        <taxon>Methanosarcinales</taxon>
        <taxon>Methanosarcinaceae</taxon>
        <taxon>Methanosarcina</taxon>
    </lineage>
</organism>
<name>DNAJ_METTE</name>
<protein>
    <recommendedName>
        <fullName evidence="1">Chaperone protein DnaJ</fullName>
    </recommendedName>
</protein>
<dbReference type="EMBL" id="AJ010152">
    <property type="protein sequence ID" value="CAB53763.1"/>
    <property type="molecule type" value="Genomic_DNA"/>
</dbReference>
<dbReference type="SMR" id="Q9UXR9"/>
<dbReference type="GO" id="GO:0005737">
    <property type="term" value="C:cytoplasm"/>
    <property type="evidence" value="ECO:0007669"/>
    <property type="project" value="UniProtKB-SubCell"/>
</dbReference>
<dbReference type="GO" id="GO:0005524">
    <property type="term" value="F:ATP binding"/>
    <property type="evidence" value="ECO:0007669"/>
    <property type="project" value="InterPro"/>
</dbReference>
<dbReference type="GO" id="GO:0031072">
    <property type="term" value="F:heat shock protein binding"/>
    <property type="evidence" value="ECO:0007669"/>
    <property type="project" value="InterPro"/>
</dbReference>
<dbReference type="GO" id="GO:0051082">
    <property type="term" value="F:unfolded protein binding"/>
    <property type="evidence" value="ECO:0007669"/>
    <property type="project" value="UniProtKB-UniRule"/>
</dbReference>
<dbReference type="GO" id="GO:0008270">
    <property type="term" value="F:zinc ion binding"/>
    <property type="evidence" value="ECO:0007669"/>
    <property type="project" value="UniProtKB-UniRule"/>
</dbReference>
<dbReference type="GO" id="GO:0051085">
    <property type="term" value="P:chaperone cofactor-dependent protein refolding"/>
    <property type="evidence" value="ECO:0007669"/>
    <property type="project" value="TreeGrafter"/>
</dbReference>
<dbReference type="GO" id="GO:0006260">
    <property type="term" value="P:DNA replication"/>
    <property type="evidence" value="ECO:0007669"/>
    <property type="project" value="UniProtKB-KW"/>
</dbReference>
<dbReference type="GO" id="GO:0042026">
    <property type="term" value="P:protein refolding"/>
    <property type="evidence" value="ECO:0007669"/>
    <property type="project" value="TreeGrafter"/>
</dbReference>
<dbReference type="GO" id="GO:0009408">
    <property type="term" value="P:response to heat"/>
    <property type="evidence" value="ECO:0007669"/>
    <property type="project" value="InterPro"/>
</dbReference>
<dbReference type="CDD" id="cd06257">
    <property type="entry name" value="DnaJ"/>
    <property type="match status" value="1"/>
</dbReference>
<dbReference type="CDD" id="cd10747">
    <property type="entry name" value="DnaJ_C"/>
    <property type="match status" value="1"/>
</dbReference>
<dbReference type="CDD" id="cd10719">
    <property type="entry name" value="DnaJ_zf"/>
    <property type="match status" value="1"/>
</dbReference>
<dbReference type="FunFam" id="2.60.260.20:FF:000005">
    <property type="entry name" value="Chaperone protein dnaJ 1, mitochondrial"/>
    <property type="match status" value="1"/>
</dbReference>
<dbReference type="FunFam" id="1.10.287.110:FF:000031">
    <property type="entry name" value="Molecular chaperone DnaJ"/>
    <property type="match status" value="1"/>
</dbReference>
<dbReference type="FunFam" id="2.10.230.10:FF:000002">
    <property type="entry name" value="Molecular chaperone DnaJ"/>
    <property type="match status" value="1"/>
</dbReference>
<dbReference type="Gene3D" id="1.10.287.110">
    <property type="entry name" value="DnaJ domain"/>
    <property type="match status" value="1"/>
</dbReference>
<dbReference type="Gene3D" id="2.10.230.10">
    <property type="entry name" value="Heat shock protein DnaJ, cysteine-rich domain"/>
    <property type="match status" value="1"/>
</dbReference>
<dbReference type="Gene3D" id="2.60.260.20">
    <property type="entry name" value="Urease metallochaperone UreE, N-terminal domain"/>
    <property type="match status" value="2"/>
</dbReference>
<dbReference type="HAMAP" id="MF_01152">
    <property type="entry name" value="DnaJ"/>
    <property type="match status" value="1"/>
</dbReference>
<dbReference type="InterPro" id="IPR012724">
    <property type="entry name" value="DnaJ"/>
</dbReference>
<dbReference type="InterPro" id="IPR002939">
    <property type="entry name" value="DnaJ_C"/>
</dbReference>
<dbReference type="InterPro" id="IPR001623">
    <property type="entry name" value="DnaJ_domain"/>
</dbReference>
<dbReference type="InterPro" id="IPR018253">
    <property type="entry name" value="DnaJ_domain_CS"/>
</dbReference>
<dbReference type="InterPro" id="IPR008971">
    <property type="entry name" value="HSP40/DnaJ_pept-bd"/>
</dbReference>
<dbReference type="InterPro" id="IPR001305">
    <property type="entry name" value="HSP_DnaJ_Cys-rich_dom"/>
</dbReference>
<dbReference type="InterPro" id="IPR036410">
    <property type="entry name" value="HSP_DnaJ_Cys-rich_dom_sf"/>
</dbReference>
<dbReference type="InterPro" id="IPR036869">
    <property type="entry name" value="J_dom_sf"/>
</dbReference>
<dbReference type="NCBIfam" id="TIGR02349">
    <property type="entry name" value="DnaJ_bact"/>
    <property type="match status" value="1"/>
</dbReference>
<dbReference type="NCBIfam" id="NF008035">
    <property type="entry name" value="PRK10767.1"/>
    <property type="match status" value="1"/>
</dbReference>
<dbReference type="NCBIfam" id="NF010891">
    <property type="entry name" value="PRK14298.1"/>
    <property type="match status" value="1"/>
</dbReference>
<dbReference type="PANTHER" id="PTHR43096">
    <property type="entry name" value="DNAJ HOMOLOG 1, MITOCHONDRIAL-RELATED"/>
    <property type="match status" value="1"/>
</dbReference>
<dbReference type="PANTHER" id="PTHR43096:SF52">
    <property type="entry name" value="DNAJ HOMOLOG 1, MITOCHONDRIAL-RELATED"/>
    <property type="match status" value="1"/>
</dbReference>
<dbReference type="Pfam" id="PF00226">
    <property type="entry name" value="DnaJ"/>
    <property type="match status" value="1"/>
</dbReference>
<dbReference type="Pfam" id="PF01556">
    <property type="entry name" value="DnaJ_C"/>
    <property type="match status" value="1"/>
</dbReference>
<dbReference type="Pfam" id="PF00684">
    <property type="entry name" value="DnaJ_CXXCXGXG"/>
    <property type="match status" value="1"/>
</dbReference>
<dbReference type="PRINTS" id="PR00625">
    <property type="entry name" value="JDOMAIN"/>
</dbReference>
<dbReference type="SMART" id="SM00271">
    <property type="entry name" value="DnaJ"/>
    <property type="match status" value="1"/>
</dbReference>
<dbReference type="SUPFAM" id="SSF46565">
    <property type="entry name" value="Chaperone J-domain"/>
    <property type="match status" value="1"/>
</dbReference>
<dbReference type="SUPFAM" id="SSF57938">
    <property type="entry name" value="DnaJ/Hsp40 cysteine-rich domain"/>
    <property type="match status" value="1"/>
</dbReference>
<dbReference type="SUPFAM" id="SSF49493">
    <property type="entry name" value="HSP40/DnaJ peptide-binding domain"/>
    <property type="match status" value="2"/>
</dbReference>
<dbReference type="PROSITE" id="PS00636">
    <property type="entry name" value="DNAJ_1"/>
    <property type="match status" value="1"/>
</dbReference>
<dbReference type="PROSITE" id="PS50076">
    <property type="entry name" value="DNAJ_2"/>
    <property type="match status" value="1"/>
</dbReference>
<dbReference type="PROSITE" id="PS51188">
    <property type="entry name" value="ZF_CR"/>
    <property type="match status" value="1"/>
</dbReference>
<reference key="1">
    <citation type="journal article" date="1999" name="Gene">
        <title>The genes coding for the hsp70 (dnaK) molecular chaperone machine occur in the moderate thermophilic archaeon Methanosarcina thermophila TM-1.</title>
        <authorList>
            <person name="Hofman-Bang J.P."/>
            <person name="Lange M."/>
            <person name="Conway de Macario E."/>
            <person name="Macario A.J.P."/>
            <person name="Ahring B.K."/>
        </authorList>
    </citation>
    <scope>NUCLEOTIDE SEQUENCE [GENOMIC DNA]</scope>
    <source>
        <strain>ATCC 43570 / DSM 1825 / OCM 12 / TM-1</strain>
    </source>
</reference>
<gene>
    <name evidence="1" type="primary">dnaJ</name>
    <name type="synonym">hsp40</name>
</gene>
<feature type="chain" id="PRO_0000070951" description="Chaperone protein DnaJ">
    <location>
        <begin position="1"/>
        <end position="387"/>
    </location>
</feature>
<feature type="domain" description="J" evidence="1">
    <location>
        <begin position="6"/>
        <end position="70"/>
    </location>
</feature>
<feature type="repeat" description="CXXCXGXG motif">
    <location>
        <begin position="143"/>
        <end position="150"/>
    </location>
</feature>
<feature type="repeat" description="CXXCXGXG motif">
    <location>
        <begin position="160"/>
        <end position="167"/>
    </location>
</feature>
<feature type="repeat" description="CXXCXGXG motif">
    <location>
        <begin position="186"/>
        <end position="193"/>
    </location>
</feature>
<feature type="repeat" description="CXXCXGXG motif">
    <location>
        <begin position="200"/>
        <end position="207"/>
    </location>
</feature>
<feature type="zinc finger region" description="CR-type" evidence="1">
    <location>
        <begin position="130"/>
        <end position="212"/>
    </location>
</feature>
<feature type="region of interest" description="Disordered" evidence="2">
    <location>
        <begin position="143"/>
        <end position="162"/>
    </location>
</feature>
<feature type="binding site" evidence="1">
    <location>
        <position position="143"/>
    </location>
    <ligand>
        <name>Zn(2+)</name>
        <dbReference type="ChEBI" id="CHEBI:29105"/>
        <label>1</label>
    </ligand>
</feature>
<feature type="binding site" evidence="1">
    <location>
        <position position="146"/>
    </location>
    <ligand>
        <name>Zn(2+)</name>
        <dbReference type="ChEBI" id="CHEBI:29105"/>
        <label>1</label>
    </ligand>
</feature>
<feature type="binding site" evidence="1">
    <location>
        <position position="160"/>
    </location>
    <ligand>
        <name>Zn(2+)</name>
        <dbReference type="ChEBI" id="CHEBI:29105"/>
        <label>2</label>
    </ligand>
</feature>
<feature type="binding site" evidence="1">
    <location>
        <position position="163"/>
    </location>
    <ligand>
        <name>Zn(2+)</name>
        <dbReference type="ChEBI" id="CHEBI:29105"/>
        <label>2</label>
    </ligand>
</feature>
<feature type="binding site" evidence="1">
    <location>
        <position position="186"/>
    </location>
    <ligand>
        <name>Zn(2+)</name>
        <dbReference type="ChEBI" id="CHEBI:29105"/>
        <label>2</label>
    </ligand>
</feature>
<feature type="binding site" evidence="1">
    <location>
        <position position="189"/>
    </location>
    <ligand>
        <name>Zn(2+)</name>
        <dbReference type="ChEBI" id="CHEBI:29105"/>
        <label>2</label>
    </ligand>
</feature>
<feature type="binding site" evidence="1">
    <location>
        <position position="200"/>
    </location>
    <ligand>
        <name>Zn(2+)</name>
        <dbReference type="ChEBI" id="CHEBI:29105"/>
        <label>1</label>
    </ligand>
</feature>
<feature type="binding site" evidence="1">
    <location>
        <position position="203"/>
    </location>
    <ligand>
        <name>Zn(2+)</name>
        <dbReference type="ChEBI" id="CHEBI:29105"/>
        <label>1</label>
    </ligand>
</feature>
<sequence length="387" mass="42554">MATTRDYYEILGLSRDATPEDIKKSYRKLALKYHPDRNKEPGAEEKFKEISEAYAVLSDPEKRAQYDRFGHAGINGQYTAEDIFRGADFSGFGDIFEMFFGGSRRGPRGPRRGSDLQYDLYITFEEAAFGVRKDIDVPRTERCSNCSGTGARPGTSPKRCPTCGGTGQIRTTRTGLGMQFVSTTTCSTCRGKGQVIESPCPVCSGTGRVRNTRKITVNVPAGADSGMSLRLSGEGDAGDPGAPPGDLYVVLHVMEHKIFKRVDYDVISEVPISFAQAALGTDIMVDTLYGKVKMNIPAGTPTHSVFKIKEKGIQHLHGNRRGDQLVRVVIKTPTNLSHEQKRNFFASLKALSSGKNPGGEKGRYDKFTEKSKKSKGFFEKVKDAFES</sequence>
<comment type="function">
    <text evidence="1">Participates actively in the response to hyperosmotic and heat shock by preventing the aggregation of stress-denatured proteins and by disaggregating proteins, also in an autonomous, DnaK-independent fashion. Unfolded proteins bind initially to DnaJ; upon interaction with the DnaJ-bound protein, DnaK hydrolyzes its bound ATP, resulting in the formation of a stable complex. GrpE releases ADP from DnaK; ATP binding to DnaK triggers the release of the substrate protein, thus completing the reaction cycle. Several rounds of ATP-dependent interactions between DnaJ, DnaK and GrpE are required for fully efficient folding. Also involved, together with DnaK and GrpE, in the DNA replication of plasmids through activation of initiation proteins.</text>
</comment>
<comment type="cofactor">
    <cofactor evidence="1">
        <name>Zn(2+)</name>
        <dbReference type="ChEBI" id="CHEBI:29105"/>
    </cofactor>
    <text evidence="1">Binds 2 Zn(2+) ions per monomer.</text>
</comment>
<comment type="subunit">
    <text evidence="1">Homodimer.</text>
</comment>
<comment type="subcellular location">
    <subcellularLocation>
        <location evidence="1">Cytoplasm</location>
    </subcellularLocation>
</comment>
<comment type="domain">
    <text evidence="1">The J domain is necessary and sufficient to stimulate DnaK ATPase activity. Zinc center 1 plays an important role in the autonomous, DnaK-independent chaperone activity of DnaJ. Zinc center 2 is essential for interaction with DnaK and for DnaJ activity.</text>
</comment>
<comment type="similarity">
    <text evidence="1">Belongs to the DnaJ family.</text>
</comment>
<proteinExistence type="inferred from homology"/>
<evidence type="ECO:0000255" key="1">
    <source>
        <dbReference type="HAMAP-Rule" id="MF_01152"/>
    </source>
</evidence>
<evidence type="ECO:0000256" key="2">
    <source>
        <dbReference type="SAM" id="MobiDB-lite"/>
    </source>
</evidence>
<accession>Q9UXR9</accession>
<keyword id="KW-0143">Chaperone</keyword>
<keyword id="KW-0963">Cytoplasm</keyword>
<keyword id="KW-0235">DNA replication</keyword>
<keyword id="KW-0479">Metal-binding</keyword>
<keyword id="KW-0677">Repeat</keyword>
<keyword id="KW-0346">Stress response</keyword>
<keyword id="KW-0862">Zinc</keyword>
<keyword id="KW-0863">Zinc-finger</keyword>